<protein>
    <recommendedName>
        <fullName>Heparin lyase I</fullName>
        <shortName>Heparinase I</shortName>
        <ecNumber>4.2.2.7</ecNumber>
    </recommendedName>
</protein>
<reference key="1">
    <citation type="journal article" date="1993" name="Proc. Natl. Acad. Sci. U.S.A.">
        <title>Cloning and expression of heparinase I gene from Flavobacterium heparinum.</title>
        <authorList>
            <person name="Sasisekharan R."/>
            <person name="Bulmer M."/>
            <person name="Moremen K.W."/>
            <person name="Cooney C.L."/>
            <person name="Langer R."/>
        </authorList>
    </citation>
    <scope>NUCLEOTIDE SEQUENCE [GENOMIC DNA]</scope>
    <scope>PARTIAL PROTEIN SEQUENCE</scope>
</reference>
<reference key="2">
    <citation type="journal article" date="1996" name="Biochem. J.">
        <title>Expression in Escherichia coli, purification and characterization of heparinase I from Flavobacterium heparinum.</title>
        <authorList>
            <person name="Ernst S."/>
            <person name="Venkataraman G."/>
            <person name="Winkler S."/>
            <person name="Godavarti R."/>
            <person name="Langer R."/>
            <person name="Cooney C.L."/>
            <person name="Sasisekharan R."/>
        </authorList>
    </citation>
    <scope>PROTEIN SEQUENCE OF 22-27</scope>
    <scope>CHARACTERIZATION</scope>
</reference>
<reference key="3">
    <citation type="journal article" date="1995" name="Glycobiology">
        <title>Structural characterization of the novel O-linked carbohydrate structure of Flavobacterium heparinum heparinase I.</title>
        <authorList>
            <person name="Huang L."/>
            <person name="van Halbeek H."/>
            <person name="Eggimann B."/>
            <person name="Zimmermannn J."/>
        </authorList>
    </citation>
    <scope>GLYCOSYLATION AT SER-39</scope>
    <scope>STRUCTURE OF CARBOHYDRATE</scope>
    <scope>MASS SPECTROMETRY</scope>
</reference>
<proteinExistence type="evidence at protein level"/>
<organism>
    <name type="scientific">Pedobacter heparinus</name>
    <name type="common">Flavobacterium heparinum</name>
    <dbReference type="NCBI Taxonomy" id="984"/>
    <lineage>
        <taxon>Bacteria</taxon>
        <taxon>Pseudomonadati</taxon>
        <taxon>Bacteroidota</taxon>
        <taxon>Sphingobacteriia</taxon>
        <taxon>Sphingobacteriales</taxon>
        <taxon>Sphingobacteriaceae</taxon>
        <taxon>Pedobacter</taxon>
    </lineage>
</organism>
<name>HEP1_PEDHE</name>
<comment type="function">
    <text>Degrades heparin and heparan sulfate. Also implicated in the release of heparin-bound growth factors from the extracellular matrix.</text>
</comment>
<comment type="catalytic activity">
    <reaction>
        <text>Eliminative cleavage of polysaccharides containing (1-&gt;4)-linked D-glucuronate or L-iduronate residues and (1-&gt;4)-alpha-linked 2-sulfoamino-2-deoxy-6-sulfo-D-glucose residues to give oligosaccharides with terminal 4-deoxy-alpha-D-gluc-4-enuronosyl groups at their non-reducing ends.</text>
        <dbReference type="EC" id="4.2.2.7"/>
    </reaction>
</comment>
<comment type="biophysicochemical properties">
    <kinetics>
        <KM>33 uM for native heparinase</KM>
        <KM>47 uM for recombinant heparinase</KM>
    </kinetics>
</comment>
<comment type="subunit">
    <text>Monomer.</text>
</comment>
<comment type="subcellular location">
    <subcellularLocation>
        <location>Periplasm</location>
    </subcellularLocation>
</comment>
<comment type="induction">
    <text>By heparin.</text>
</comment>
<comment type="PTM">
    <text>The N-terminus is blocked.</text>
</comment>
<comment type="mass spectrometry" mass="42502.0" error="2.8" method="Electrospray" evidence="2"/>
<feature type="signal peptide" evidence="1">
    <location>
        <begin position="1"/>
        <end position="21"/>
    </location>
</feature>
<feature type="chain" id="PRO_0000021411" description="Heparin lyase I">
    <location>
        <begin position="22"/>
        <end position="384"/>
    </location>
</feature>
<feature type="modified residue" description="Blocked amino end (Gln)">
    <location>
        <position position="22"/>
    </location>
</feature>
<feature type="glycosylation site" description="O-linked (Man...) serine" evidence="2">
    <location>
        <position position="39"/>
    </location>
</feature>
<sequence length="384" mass="43807">MKKQILYLIVLQQLFLCSAYAQQKKSGNIPYRVNVQADSAKQKAIIDNKWVAVGINKPYALQYDDKLRFNGKPSYRFELKAEDNSLEGYAAGETKGRTELSYSYATTNDFKKFPPSVYQNAQKLKTVYHYGKGICEQGSSRSYTFSVYIPSSFPDNATTIFAQWHGAPSRTLVATPEGEIKTLSIEEFLALYDRMIFKKNIAHDKVEKKDKDGKITYVAGKPNGWKVEQGGYPTLAFGFSKGYFYIKANSDRQWLTDKADRNNANPENSEVMKPYSSEYKTSTIAYKMPFAQFPKDCWITFDVAIDWTKYGKEANTILKPGKLDVMMTYTKNKKPQKAHIVNQQEILIGRNDDDGYYFKFGIYRVGNSTVPVTYNLSGYSETAR</sequence>
<evidence type="ECO:0000269" key="1">
    <source>
    </source>
</evidence>
<evidence type="ECO:0000269" key="2">
    <source ref="3"/>
</evidence>
<dbReference type="EC" id="4.2.2.7"/>
<dbReference type="EMBL" id="L12534">
    <property type="protein sequence ID" value="AAA24920.1"/>
    <property type="molecule type" value="Genomic_DNA"/>
</dbReference>
<dbReference type="PIR" id="A47479">
    <property type="entry name" value="A47479"/>
</dbReference>
<dbReference type="SMR" id="Q05819"/>
<dbReference type="CAZy" id="PL13">
    <property type="family name" value="Polysaccharide Lyase Family 13"/>
</dbReference>
<dbReference type="BioCyc" id="MetaCyc:MONOMER-19213"/>
<dbReference type="BRENDA" id="4.2.2.8">
    <property type="organism ID" value="2286"/>
</dbReference>
<dbReference type="SABIO-RK" id="Q05819"/>
<dbReference type="GO" id="GO:0042597">
    <property type="term" value="C:periplasmic space"/>
    <property type="evidence" value="ECO:0007669"/>
    <property type="project" value="UniProtKB-SubCell"/>
</dbReference>
<dbReference type="GO" id="GO:0008201">
    <property type="term" value="F:heparin binding"/>
    <property type="evidence" value="ECO:0007669"/>
    <property type="project" value="UniProtKB-KW"/>
</dbReference>
<dbReference type="GO" id="GO:0047488">
    <property type="term" value="F:heparin lyase activity"/>
    <property type="evidence" value="ECO:0007669"/>
    <property type="project" value="UniProtKB-EC"/>
</dbReference>
<dbReference type="Gene3D" id="2.60.120.200">
    <property type="match status" value="1"/>
</dbReference>
<dbReference type="Gene3D" id="3.10.540.20">
    <property type="match status" value="1"/>
</dbReference>
<dbReference type="InterPro" id="IPR025975">
    <property type="entry name" value="Polysacc_lyase"/>
</dbReference>
<dbReference type="Pfam" id="PF14099">
    <property type="entry name" value="Polysacc_lyase"/>
    <property type="match status" value="1"/>
</dbReference>
<accession>Q05819</accession>
<keyword id="KW-0903">Direct protein sequencing</keyword>
<keyword id="KW-0325">Glycoprotein</keyword>
<keyword id="KW-0358">Heparin-binding</keyword>
<keyword id="KW-0456">Lyase</keyword>
<keyword id="KW-0574">Periplasm</keyword>
<keyword id="KW-0732">Signal</keyword>